<name>PHZB_PSECL</name>
<accession>Q51519</accession>
<sequence>MSQTAAHLMERILQPAPEPFALLYRPESSGPGLLDVLIGEMSEPQVLADIDLPATSIGAPRLDVLALIPYRQIAERGFEAVDDESPLLAMNITEQQSISIERLLGMLPNVPIQLNSERFDLSDASYAEIVSQVIANEIGSGEGANFVIKRTFLAEISEYGPASALSFFRHLLEREKGAYWTFIIHTGSRTFVGASPERHISIKDGLSVMNPISGTYRYPPAGPNLSEVMDFLADRKEADELYMVVDEELKMMARICEDGGHVLGPYLKEMAHLAHTEYFIEGKTHRDVREILRETLFAPTVTGSPLESACRVIQRYEPQGRAYYSGMAALIGSDGKGGRSLDSAILIRTADIDNSGEVRISVGSTIVRHSDPMTEAAESRAKATGLISALKNQAPSRFGNHLQVRAALASRNAYVSDFWLMDSQQREQIQADFSGRQVLIVDAEDTFTSMIAKQLRALGLVVTVCSFSDEYSFEGYDLVIMGPGPGNPSEVQQPKINHLHVAIRSLLSQQRPFLAVCLSHQVLSLCLGLELQRKAIPNQGVQKQIDLFGNVERVGFYNTFAAQSSSDRLDIDGIGTVEISRDSETGEVHALRGPSFASMQFHAESLLTQEGPRIIADLLRHALIHTPVENNASAAGR</sequence>
<feature type="chain" id="PRO_0000056907" description="Anthranilate synthase, phenazine specific">
    <location>
        <begin position="1"/>
        <end position="637"/>
    </location>
</feature>
<feature type="domain" description="Glutamine amidotransferase type-1" evidence="1">
    <location>
        <begin position="437"/>
        <end position="628"/>
    </location>
</feature>
<feature type="region of interest" description="Anthranilate synthase component I">
    <location>
        <begin position="1"/>
        <end position="434"/>
    </location>
</feature>
<feature type="active site" description="For GATase activity" evidence="1">
    <location>
        <position position="517"/>
    </location>
</feature>
<feature type="active site" description="For GATase activity" evidence="1">
    <location>
        <position position="602"/>
    </location>
</feature>
<feature type="active site" description="For GATase activity" evidence="1">
    <location>
        <position position="604"/>
    </location>
</feature>
<evidence type="ECO:0000255" key="1">
    <source>
        <dbReference type="PROSITE-ProRule" id="PRU00605"/>
    </source>
</evidence>
<dbReference type="EC" id="4.1.3.27"/>
<dbReference type="EMBL" id="L48339">
    <property type="protein sequence ID" value="AAB00330.1"/>
    <property type="molecule type" value="Genomic_DNA"/>
</dbReference>
<dbReference type="SMR" id="Q51519"/>
<dbReference type="UniPathway" id="UPA00099"/>
<dbReference type="GO" id="GO:0004049">
    <property type="term" value="F:anthranilate synthase activity"/>
    <property type="evidence" value="ECO:0007669"/>
    <property type="project" value="UniProtKB-EC"/>
</dbReference>
<dbReference type="GO" id="GO:0016740">
    <property type="term" value="F:transferase activity"/>
    <property type="evidence" value="ECO:0007669"/>
    <property type="project" value="UniProtKB-KW"/>
</dbReference>
<dbReference type="GO" id="GO:0000162">
    <property type="term" value="P:L-tryptophan biosynthetic process"/>
    <property type="evidence" value="ECO:0007669"/>
    <property type="project" value="TreeGrafter"/>
</dbReference>
<dbReference type="GO" id="GO:0002047">
    <property type="term" value="P:phenazine biosynthetic process"/>
    <property type="evidence" value="ECO:0007669"/>
    <property type="project" value="UniProtKB-UniPathway"/>
</dbReference>
<dbReference type="CDD" id="cd01743">
    <property type="entry name" value="GATase1_Anthranilate_Synthase"/>
    <property type="match status" value="1"/>
</dbReference>
<dbReference type="Gene3D" id="3.40.50.880">
    <property type="match status" value="1"/>
</dbReference>
<dbReference type="Gene3D" id="3.60.120.10">
    <property type="entry name" value="Anthranilate synthase"/>
    <property type="match status" value="1"/>
</dbReference>
<dbReference type="InterPro" id="IPR005801">
    <property type="entry name" value="ADC_synthase"/>
</dbReference>
<dbReference type="InterPro" id="IPR019999">
    <property type="entry name" value="Anth_synth_I-like"/>
</dbReference>
<dbReference type="InterPro" id="IPR015890">
    <property type="entry name" value="Chorismate_C"/>
</dbReference>
<dbReference type="InterPro" id="IPR029062">
    <property type="entry name" value="Class_I_gatase-like"/>
</dbReference>
<dbReference type="InterPro" id="IPR017926">
    <property type="entry name" value="GATASE"/>
</dbReference>
<dbReference type="InterPro" id="IPR006221">
    <property type="entry name" value="TrpG/PapA_dom"/>
</dbReference>
<dbReference type="PANTHER" id="PTHR11236">
    <property type="entry name" value="AMINOBENZOATE/ANTHRANILATE SYNTHASE"/>
    <property type="match status" value="1"/>
</dbReference>
<dbReference type="PANTHER" id="PTHR11236:SF49">
    <property type="entry name" value="ANTHRANILATE SYNTHASE COMPONENT 1"/>
    <property type="match status" value="1"/>
</dbReference>
<dbReference type="Pfam" id="PF00425">
    <property type="entry name" value="Chorismate_bind"/>
    <property type="match status" value="1"/>
</dbReference>
<dbReference type="Pfam" id="PF00117">
    <property type="entry name" value="GATase"/>
    <property type="match status" value="1"/>
</dbReference>
<dbReference type="PRINTS" id="PR00097">
    <property type="entry name" value="ANTSNTHASEII"/>
</dbReference>
<dbReference type="PRINTS" id="PR00099">
    <property type="entry name" value="CPSGATASE"/>
</dbReference>
<dbReference type="PRINTS" id="PR00096">
    <property type="entry name" value="GATASE"/>
</dbReference>
<dbReference type="SUPFAM" id="SSF56322">
    <property type="entry name" value="ADC synthase"/>
    <property type="match status" value="1"/>
</dbReference>
<dbReference type="SUPFAM" id="SSF52317">
    <property type="entry name" value="Class I glutamine amidotransferase-like"/>
    <property type="match status" value="1"/>
</dbReference>
<dbReference type="PROSITE" id="PS51273">
    <property type="entry name" value="GATASE_TYPE_1"/>
    <property type="match status" value="1"/>
</dbReference>
<comment type="function">
    <text>Involved in the biosynthesis of the antibiotic, phenazine, a nitrogen-containing heterocyclic molecule having important roles in virulence, competition and biological control.</text>
</comment>
<comment type="catalytic activity">
    <reaction>
        <text>chorismate + L-glutamine = anthranilate + pyruvate + L-glutamate + H(+)</text>
        <dbReference type="Rhea" id="RHEA:21732"/>
        <dbReference type="ChEBI" id="CHEBI:15361"/>
        <dbReference type="ChEBI" id="CHEBI:15378"/>
        <dbReference type="ChEBI" id="CHEBI:16567"/>
        <dbReference type="ChEBI" id="CHEBI:29748"/>
        <dbReference type="ChEBI" id="CHEBI:29985"/>
        <dbReference type="ChEBI" id="CHEBI:58359"/>
        <dbReference type="EC" id="4.1.3.27"/>
    </reaction>
</comment>
<comment type="pathway">
    <text>Antibiotic biosynthesis; phenazine biosynthesis.</text>
</comment>
<comment type="miscellaneous">
    <text>Component I catalyzes the formation of anthranilate using ammonia rather than glutamine, whereas component II provides glutamine amidotransferase activity.</text>
</comment>
<gene>
    <name type="primary">phzB</name>
</gene>
<proteinExistence type="predicted"/>
<keyword id="KW-0045">Antibiotic biosynthesis</keyword>
<keyword id="KW-0315">Glutamine amidotransferase</keyword>
<keyword id="KW-0456">Lyase</keyword>
<keyword id="KW-0808">Transferase</keyword>
<keyword id="KW-0843">Virulence</keyword>
<protein>
    <recommendedName>
        <fullName>Anthranilate synthase, phenazine specific</fullName>
        <ecNumber>4.1.3.27</ecNumber>
    </recommendedName>
    <domain>
        <recommendedName>
            <fullName>Glutamine amidotransferase</fullName>
        </recommendedName>
    </domain>
</protein>
<reference key="1">
    <citation type="journal article" date="1995" name="FEMS Microbiol. Lett.">
        <title>Molecular analysis of genes encoding phenazine biosynthesis in the biological control bacterium. Pseudomonas aureofaciens 30-84.</title>
        <authorList>
            <person name="Pierson L.S. III"/>
            <person name="Gaffney T."/>
            <person name="Lam S."/>
            <person name="Gong F."/>
        </authorList>
    </citation>
    <scope>NUCLEOTIDE SEQUENCE [GENOMIC DNA]</scope>
    <source>
        <strain>30-84</strain>
    </source>
</reference>
<organism>
    <name type="scientific">Pseudomonas chlororaphis</name>
    <name type="common">Pseudomonas aureofaciens</name>
    <dbReference type="NCBI Taxonomy" id="333"/>
    <lineage>
        <taxon>Bacteria</taxon>
        <taxon>Pseudomonadati</taxon>
        <taxon>Pseudomonadota</taxon>
        <taxon>Gammaproteobacteria</taxon>
        <taxon>Pseudomonadales</taxon>
        <taxon>Pseudomonadaceae</taxon>
        <taxon>Pseudomonas</taxon>
    </lineage>
</organism>